<reference key="1">
    <citation type="journal article" date="2009" name="Genome Biol.">
        <title>Genomic and genetic analyses of diversity and plant interactions of Pseudomonas fluorescens.</title>
        <authorList>
            <person name="Silby M.W."/>
            <person name="Cerdeno-Tarraga A.M."/>
            <person name="Vernikos G.S."/>
            <person name="Giddens S.R."/>
            <person name="Jackson R.W."/>
            <person name="Preston G.M."/>
            <person name="Zhang X.-X."/>
            <person name="Moon C.D."/>
            <person name="Gehrig S.M."/>
            <person name="Godfrey S.A.C."/>
            <person name="Knight C.G."/>
            <person name="Malone J.G."/>
            <person name="Robinson Z."/>
            <person name="Spiers A.J."/>
            <person name="Harris S."/>
            <person name="Challis G.L."/>
            <person name="Yaxley A.M."/>
            <person name="Harris D."/>
            <person name="Seeger K."/>
            <person name="Murphy L."/>
            <person name="Rutter S."/>
            <person name="Squares R."/>
            <person name="Quail M.A."/>
            <person name="Saunders E."/>
            <person name="Mavromatis K."/>
            <person name="Brettin T.S."/>
            <person name="Bentley S.D."/>
            <person name="Hothersall J."/>
            <person name="Stephens E."/>
            <person name="Thomas C.M."/>
            <person name="Parkhill J."/>
            <person name="Levy S.B."/>
            <person name="Rainey P.B."/>
            <person name="Thomson N.R."/>
        </authorList>
    </citation>
    <scope>NUCLEOTIDE SEQUENCE [LARGE SCALE GENOMIC DNA]</scope>
    <source>
        <strain>Pf0-1</strain>
    </source>
</reference>
<dbReference type="EC" id="7.3.2.2" evidence="1"/>
<dbReference type="EMBL" id="CP000094">
    <property type="protein sequence ID" value="ABA74174.1"/>
    <property type="molecule type" value="Genomic_DNA"/>
</dbReference>
<dbReference type="RefSeq" id="WP_011333855.1">
    <property type="nucleotide sequence ID" value="NC_007492.2"/>
</dbReference>
<dbReference type="SMR" id="Q3KDI1"/>
<dbReference type="KEGG" id="pfo:Pfl01_2433"/>
<dbReference type="eggNOG" id="COG3638">
    <property type="taxonomic scope" value="Bacteria"/>
</dbReference>
<dbReference type="HOGENOM" id="CLU_000604_1_22_6"/>
<dbReference type="Proteomes" id="UP000002704">
    <property type="component" value="Chromosome"/>
</dbReference>
<dbReference type="GO" id="GO:0005886">
    <property type="term" value="C:plasma membrane"/>
    <property type="evidence" value="ECO:0007669"/>
    <property type="project" value="UniProtKB-SubCell"/>
</dbReference>
<dbReference type="GO" id="GO:0015416">
    <property type="term" value="F:ABC-type phosphonate transporter activity"/>
    <property type="evidence" value="ECO:0007669"/>
    <property type="project" value="UniProtKB-EC"/>
</dbReference>
<dbReference type="GO" id="GO:0005524">
    <property type="term" value="F:ATP binding"/>
    <property type="evidence" value="ECO:0007669"/>
    <property type="project" value="UniProtKB-KW"/>
</dbReference>
<dbReference type="GO" id="GO:0016887">
    <property type="term" value="F:ATP hydrolysis activity"/>
    <property type="evidence" value="ECO:0007669"/>
    <property type="project" value="InterPro"/>
</dbReference>
<dbReference type="Gene3D" id="3.40.50.300">
    <property type="entry name" value="P-loop containing nucleotide triphosphate hydrolases"/>
    <property type="match status" value="1"/>
</dbReference>
<dbReference type="InterPro" id="IPR003593">
    <property type="entry name" value="AAA+_ATPase"/>
</dbReference>
<dbReference type="InterPro" id="IPR003439">
    <property type="entry name" value="ABC_transporter-like_ATP-bd"/>
</dbReference>
<dbReference type="InterPro" id="IPR017871">
    <property type="entry name" value="ABC_transporter-like_CS"/>
</dbReference>
<dbReference type="InterPro" id="IPR050086">
    <property type="entry name" value="MetN_ABC_transporter-like"/>
</dbReference>
<dbReference type="InterPro" id="IPR027417">
    <property type="entry name" value="P-loop_NTPase"/>
</dbReference>
<dbReference type="PANTHER" id="PTHR43166">
    <property type="entry name" value="AMINO ACID IMPORT ATP-BINDING PROTEIN"/>
    <property type="match status" value="1"/>
</dbReference>
<dbReference type="PANTHER" id="PTHR43166:SF6">
    <property type="entry name" value="PHOSPHONATES IMPORT ATP-BINDING PROTEIN PHNC"/>
    <property type="match status" value="1"/>
</dbReference>
<dbReference type="Pfam" id="PF00005">
    <property type="entry name" value="ABC_tran"/>
    <property type="match status" value="1"/>
</dbReference>
<dbReference type="SMART" id="SM00382">
    <property type="entry name" value="AAA"/>
    <property type="match status" value="1"/>
</dbReference>
<dbReference type="SUPFAM" id="SSF52540">
    <property type="entry name" value="P-loop containing nucleoside triphosphate hydrolases"/>
    <property type="match status" value="1"/>
</dbReference>
<dbReference type="PROSITE" id="PS00211">
    <property type="entry name" value="ABC_TRANSPORTER_1"/>
    <property type="match status" value="1"/>
</dbReference>
<dbReference type="PROSITE" id="PS50893">
    <property type="entry name" value="ABC_TRANSPORTER_2"/>
    <property type="match status" value="1"/>
</dbReference>
<dbReference type="PROSITE" id="PS51249">
    <property type="entry name" value="PHNC"/>
    <property type="match status" value="1"/>
</dbReference>
<evidence type="ECO:0000255" key="1">
    <source>
        <dbReference type="HAMAP-Rule" id="MF_01713"/>
    </source>
</evidence>
<protein>
    <recommendedName>
        <fullName evidence="1">Phosphonates import ATP-binding protein PhnC</fullName>
        <ecNumber evidence="1">7.3.2.2</ecNumber>
    </recommendedName>
</protein>
<name>PHNC_PSEPF</name>
<proteinExistence type="inferred from homology"/>
<feature type="chain" id="PRO_0000274727" description="Phosphonates import ATP-binding protein PhnC">
    <location>
        <begin position="1"/>
        <end position="265"/>
    </location>
</feature>
<feature type="domain" description="ABC transporter" evidence="1">
    <location>
        <begin position="3"/>
        <end position="247"/>
    </location>
</feature>
<feature type="binding site" evidence="1">
    <location>
        <begin position="36"/>
        <end position="43"/>
    </location>
    <ligand>
        <name>ATP</name>
        <dbReference type="ChEBI" id="CHEBI:30616"/>
    </ligand>
</feature>
<keyword id="KW-0067">ATP-binding</keyword>
<keyword id="KW-0997">Cell inner membrane</keyword>
<keyword id="KW-1003">Cell membrane</keyword>
<keyword id="KW-0472">Membrane</keyword>
<keyword id="KW-0547">Nucleotide-binding</keyword>
<keyword id="KW-0918">Phosphonate transport</keyword>
<keyword id="KW-1278">Translocase</keyword>
<keyword id="KW-0813">Transport</keyword>
<gene>
    <name evidence="1" type="primary">phnC</name>
    <name type="ordered locus">Pfl01_2433</name>
</gene>
<accession>Q3KDI1</accession>
<comment type="function">
    <text evidence="1">Part of the ABC transporter complex PhnCDE involved in phosphonates import. Responsible for energy coupling to the transport system.</text>
</comment>
<comment type="catalytic activity">
    <reaction evidence="1">
        <text>phosphonate(out) + ATP + H2O = phosphonate(in) + ADP + phosphate + H(+)</text>
        <dbReference type="Rhea" id="RHEA:18065"/>
        <dbReference type="ChEBI" id="CHEBI:15377"/>
        <dbReference type="ChEBI" id="CHEBI:15378"/>
        <dbReference type="ChEBI" id="CHEBI:16215"/>
        <dbReference type="ChEBI" id="CHEBI:30616"/>
        <dbReference type="ChEBI" id="CHEBI:43474"/>
        <dbReference type="ChEBI" id="CHEBI:456216"/>
        <dbReference type="EC" id="7.3.2.2"/>
    </reaction>
</comment>
<comment type="subunit">
    <text evidence="1">The complex is composed of two ATP-binding proteins (PhnC), two transmembrane proteins (PhnE) and a solute-binding protein (PhnD).</text>
</comment>
<comment type="subcellular location">
    <subcellularLocation>
        <location evidence="1">Cell inner membrane</location>
        <topology evidence="1">Peripheral membrane protein</topology>
    </subcellularLocation>
</comment>
<comment type="similarity">
    <text evidence="1">Belongs to the ABC transporter superfamily. Phosphonates importer (TC 3.A.1.9.1) family.</text>
</comment>
<organism>
    <name type="scientific">Pseudomonas fluorescens (strain Pf0-1)</name>
    <dbReference type="NCBI Taxonomy" id="205922"/>
    <lineage>
        <taxon>Bacteria</taxon>
        <taxon>Pseudomonadati</taxon>
        <taxon>Pseudomonadota</taxon>
        <taxon>Gammaproteobacteria</taxon>
        <taxon>Pseudomonadales</taxon>
        <taxon>Pseudomonadaceae</taxon>
        <taxon>Pseudomonas</taxon>
    </lineage>
</organism>
<sequence>MTLRLKQAFLHHTNGVEALRGVDLQIEAGEQVAIIGPSGAGKSSLLNMLATAIRPSSGDIEVLGERAWHLSARQRQRLRARIGLVHQAPPLPPRQRVVTAVLAGKLGQWSLGKSLINLLHPLDVPGARAALAKLDLADKLFSQCQQLSGGQLQRVGIARVLYQAPEVLLADEPVSAMDPVLAGHTLSILSRHAREHNVTLVASLHAVELALAHFPRIVGLREGRILFDCPSAQVSRDMLDTLYANEQLQSPAPAVTPLIVQIPRC</sequence>